<evidence type="ECO:0000255" key="1">
    <source>
        <dbReference type="HAMAP-Rule" id="MF_00083"/>
    </source>
</evidence>
<accession>Q476G1</accession>
<organism>
    <name type="scientific">Cupriavidus pinatubonensis (strain JMP 134 / LMG 1197)</name>
    <name type="common">Cupriavidus necator (strain JMP 134)</name>
    <dbReference type="NCBI Taxonomy" id="264198"/>
    <lineage>
        <taxon>Bacteria</taxon>
        <taxon>Pseudomonadati</taxon>
        <taxon>Pseudomonadota</taxon>
        <taxon>Betaproteobacteria</taxon>
        <taxon>Burkholderiales</taxon>
        <taxon>Burkholderiaceae</taxon>
        <taxon>Cupriavidus</taxon>
    </lineage>
</organism>
<keyword id="KW-0963">Cytoplasm</keyword>
<keyword id="KW-0378">Hydrolase</keyword>
<keyword id="KW-0694">RNA-binding</keyword>
<keyword id="KW-0820">tRNA-binding</keyword>
<protein>
    <recommendedName>
        <fullName evidence="1">Peptidyl-tRNA hydrolase</fullName>
        <shortName evidence="1">Pth</shortName>
        <ecNumber evidence="1">3.1.1.29</ecNumber>
    </recommendedName>
</protein>
<dbReference type="EC" id="3.1.1.29" evidence="1"/>
<dbReference type="EMBL" id="CP000090">
    <property type="protein sequence ID" value="AAZ59722.1"/>
    <property type="molecule type" value="Genomic_DNA"/>
</dbReference>
<dbReference type="SMR" id="Q476G1"/>
<dbReference type="STRING" id="264198.Reut_A0340"/>
<dbReference type="KEGG" id="reu:Reut_A0340"/>
<dbReference type="eggNOG" id="COG0193">
    <property type="taxonomic scope" value="Bacteria"/>
</dbReference>
<dbReference type="HOGENOM" id="CLU_062456_3_1_4"/>
<dbReference type="OrthoDB" id="9800507at2"/>
<dbReference type="GO" id="GO:0005737">
    <property type="term" value="C:cytoplasm"/>
    <property type="evidence" value="ECO:0007669"/>
    <property type="project" value="UniProtKB-SubCell"/>
</dbReference>
<dbReference type="GO" id="GO:0004045">
    <property type="term" value="F:peptidyl-tRNA hydrolase activity"/>
    <property type="evidence" value="ECO:0007669"/>
    <property type="project" value="UniProtKB-UniRule"/>
</dbReference>
<dbReference type="GO" id="GO:0000049">
    <property type="term" value="F:tRNA binding"/>
    <property type="evidence" value="ECO:0007669"/>
    <property type="project" value="UniProtKB-UniRule"/>
</dbReference>
<dbReference type="GO" id="GO:0006515">
    <property type="term" value="P:protein quality control for misfolded or incompletely synthesized proteins"/>
    <property type="evidence" value="ECO:0007669"/>
    <property type="project" value="UniProtKB-UniRule"/>
</dbReference>
<dbReference type="GO" id="GO:0072344">
    <property type="term" value="P:rescue of stalled ribosome"/>
    <property type="evidence" value="ECO:0007669"/>
    <property type="project" value="UniProtKB-UniRule"/>
</dbReference>
<dbReference type="CDD" id="cd00462">
    <property type="entry name" value="PTH"/>
    <property type="match status" value="1"/>
</dbReference>
<dbReference type="FunFam" id="3.40.50.1470:FF:000001">
    <property type="entry name" value="Peptidyl-tRNA hydrolase"/>
    <property type="match status" value="1"/>
</dbReference>
<dbReference type="Gene3D" id="3.40.50.1470">
    <property type="entry name" value="Peptidyl-tRNA hydrolase"/>
    <property type="match status" value="1"/>
</dbReference>
<dbReference type="HAMAP" id="MF_00083">
    <property type="entry name" value="Pept_tRNA_hydro_bact"/>
    <property type="match status" value="1"/>
</dbReference>
<dbReference type="InterPro" id="IPR001328">
    <property type="entry name" value="Pept_tRNA_hydro"/>
</dbReference>
<dbReference type="InterPro" id="IPR018171">
    <property type="entry name" value="Pept_tRNA_hydro_CS"/>
</dbReference>
<dbReference type="InterPro" id="IPR036416">
    <property type="entry name" value="Pept_tRNA_hydro_sf"/>
</dbReference>
<dbReference type="NCBIfam" id="TIGR00447">
    <property type="entry name" value="pth"/>
    <property type="match status" value="1"/>
</dbReference>
<dbReference type="PANTHER" id="PTHR17224">
    <property type="entry name" value="PEPTIDYL-TRNA HYDROLASE"/>
    <property type="match status" value="1"/>
</dbReference>
<dbReference type="PANTHER" id="PTHR17224:SF1">
    <property type="entry name" value="PEPTIDYL-TRNA HYDROLASE"/>
    <property type="match status" value="1"/>
</dbReference>
<dbReference type="Pfam" id="PF01195">
    <property type="entry name" value="Pept_tRNA_hydro"/>
    <property type="match status" value="1"/>
</dbReference>
<dbReference type="SUPFAM" id="SSF53178">
    <property type="entry name" value="Peptidyl-tRNA hydrolase-like"/>
    <property type="match status" value="1"/>
</dbReference>
<dbReference type="PROSITE" id="PS01195">
    <property type="entry name" value="PEPT_TRNA_HYDROL_1"/>
    <property type="match status" value="1"/>
</dbReference>
<dbReference type="PROSITE" id="PS01196">
    <property type="entry name" value="PEPT_TRNA_HYDROL_2"/>
    <property type="match status" value="1"/>
</dbReference>
<comment type="function">
    <text evidence="1">Hydrolyzes ribosome-free peptidyl-tRNAs (with 1 or more amino acids incorporated), which drop off the ribosome during protein synthesis, or as a result of ribosome stalling.</text>
</comment>
<comment type="function">
    <text evidence="1">Catalyzes the release of premature peptidyl moieties from peptidyl-tRNA molecules trapped in stalled 50S ribosomal subunits, and thus maintains levels of free tRNAs and 50S ribosomes.</text>
</comment>
<comment type="catalytic activity">
    <reaction evidence="1">
        <text>an N-acyl-L-alpha-aminoacyl-tRNA + H2O = an N-acyl-L-amino acid + a tRNA + H(+)</text>
        <dbReference type="Rhea" id="RHEA:54448"/>
        <dbReference type="Rhea" id="RHEA-COMP:10123"/>
        <dbReference type="Rhea" id="RHEA-COMP:13883"/>
        <dbReference type="ChEBI" id="CHEBI:15377"/>
        <dbReference type="ChEBI" id="CHEBI:15378"/>
        <dbReference type="ChEBI" id="CHEBI:59874"/>
        <dbReference type="ChEBI" id="CHEBI:78442"/>
        <dbReference type="ChEBI" id="CHEBI:138191"/>
        <dbReference type="EC" id="3.1.1.29"/>
    </reaction>
</comment>
<comment type="subunit">
    <text evidence="1">Monomer.</text>
</comment>
<comment type="subcellular location">
    <subcellularLocation>
        <location evidence="1">Cytoplasm</location>
    </subcellularLocation>
</comment>
<comment type="similarity">
    <text evidence="1">Belongs to the PTH family.</text>
</comment>
<name>PTH_CUPPJ</name>
<reference key="1">
    <citation type="journal article" date="2010" name="PLoS ONE">
        <title>The complete multipartite genome sequence of Cupriavidus necator JMP134, a versatile pollutant degrader.</title>
        <authorList>
            <person name="Lykidis A."/>
            <person name="Perez-Pantoja D."/>
            <person name="Ledger T."/>
            <person name="Mavromatis K."/>
            <person name="Anderson I.J."/>
            <person name="Ivanova N.N."/>
            <person name="Hooper S.D."/>
            <person name="Lapidus A."/>
            <person name="Lucas S."/>
            <person name="Gonzalez B."/>
            <person name="Kyrpides N.C."/>
        </authorList>
    </citation>
    <scope>NUCLEOTIDE SEQUENCE [LARGE SCALE GENOMIC DNA]</scope>
    <source>
        <strain>JMP134 / LMG 1197</strain>
    </source>
</reference>
<gene>
    <name evidence="1" type="primary">pth</name>
    <name type="ordered locus">Reut_A0340</name>
</gene>
<sequence>MIKLIVGLGNPGAEYEATRHNAGFWLVDQLARMGGTTLRVEGRFHGLAGRARLWDQDIWLLKPSTFMNRSGLAVVSLARFYKILPDEIVVAHDEMDLPPGAAKLKRGGGAGGHNGLKDIAAHLTTQEFWRLRLGVGHPRNLPGGAGAGREDVVNFVLKPPRKEEQQAIDEAIDRSIDPLGLLARGDAERAMAQLHTVAR</sequence>
<feature type="chain" id="PRO_0000264085" description="Peptidyl-tRNA hydrolase">
    <location>
        <begin position="1"/>
        <end position="199"/>
    </location>
</feature>
<feature type="active site" description="Proton acceptor" evidence="1">
    <location>
        <position position="20"/>
    </location>
</feature>
<feature type="binding site" evidence="1">
    <location>
        <position position="15"/>
    </location>
    <ligand>
        <name>tRNA</name>
        <dbReference type="ChEBI" id="CHEBI:17843"/>
    </ligand>
</feature>
<feature type="binding site" evidence="1">
    <location>
        <position position="66"/>
    </location>
    <ligand>
        <name>tRNA</name>
        <dbReference type="ChEBI" id="CHEBI:17843"/>
    </ligand>
</feature>
<feature type="binding site" evidence="1">
    <location>
        <position position="68"/>
    </location>
    <ligand>
        <name>tRNA</name>
        <dbReference type="ChEBI" id="CHEBI:17843"/>
    </ligand>
</feature>
<feature type="binding site" evidence="1">
    <location>
        <position position="114"/>
    </location>
    <ligand>
        <name>tRNA</name>
        <dbReference type="ChEBI" id="CHEBI:17843"/>
    </ligand>
</feature>
<feature type="site" description="Discriminates between blocked and unblocked aminoacyl-tRNA" evidence="1">
    <location>
        <position position="10"/>
    </location>
</feature>
<feature type="site" description="Stabilizes the basic form of H active site to accept a proton" evidence="1">
    <location>
        <position position="93"/>
    </location>
</feature>
<proteinExistence type="inferred from homology"/>